<organism>
    <name type="scientific">Lawsonia intracellularis (strain PHE/MN1-00)</name>
    <dbReference type="NCBI Taxonomy" id="363253"/>
    <lineage>
        <taxon>Bacteria</taxon>
        <taxon>Pseudomonadati</taxon>
        <taxon>Thermodesulfobacteriota</taxon>
        <taxon>Desulfovibrionia</taxon>
        <taxon>Desulfovibrionales</taxon>
        <taxon>Desulfovibrionaceae</taxon>
        <taxon>Lawsonia</taxon>
    </lineage>
</organism>
<proteinExistence type="inferred from homology"/>
<accession>Q1MQW4</accession>
<gene>
    <name evidence="1" type="primary">rplM</name>
    <name type="ordered locus">LI0559</name>
</gene>
<feature type="chain" id="PRO_0000261739" description="Large ribosomal subunit protein uL13">
    <location>
        <begin position="1"/>
        <end position="144"/>
    </location>
</feature>
<reference key="1">
    <citation type="submission" date="2005-11" db="EMBL/GenBank/DDBJ databases">
        <title>The complete genome sequence of Lawsonia intracellularis: the causative agent of proliferative enteropathy.</title>
        <authorList>
            <person name="Kaur K."/>
            <person name="Zhang Q."/>
            <person name="Beckler D."/>
            <person name="Munir S."/>
            <person name="Li L."/>
            <person name="Kinsley K."/>
            <person name="Herron L."/>
            <person name="Peterson A."/>
            <person name="May B."/>
            <person name="Singh S."/>
            <person name="Gebhart C."/>
            <person name="Kapur V."/>
        </authorList>
    </citation>
    <scope>NUCLEOTIDE SEQUENCE [LARGE SCALE GENOMIC DNA]</scope>
    <source>
        <strain>PHE/MN1-00</strain>
    </source>
</reference>
<sequence>MKTFSPKPEHISHQWFLVDAHNKILGRLAAQIAHRLRGKHKPEFAPHIDNGDYIVVVNCEQIKVTGNKQEQKKYYRHSGYVGGLKETTLKTLLEKKPAEVLIHAVRGMLPKNRLGRAMLKKLKVYAGPEHQHIAQQPIPLSLPY</sequence>
<comment type="function">
    <text evidence="1">This protein is one of the early assembly proteins of the 50S ribosomal subunit, although it is not seen to bind rRNA by itself. It is important during the early stages of 50S assembly.</text>
</comment>
<comment type="subunit">
    <text evidence="1">Part of the 50S ribosomal subunit.</text>
</comment>
<comment type="similarity">
    <text evidence="1">Belongs to the universal ribosomal protein uL13 family.</text>
</comment>
<protein>
    <recommendedName>
        <fullName evidence="1">Large ribosomal subunit protein uL13</fullName>
    </recommendedName>
    <alternativeName>
        <fullName evidence="2">50S ribosomal protein L13</fullName>
    </alternativeName>
</protein>
<keyword id="KW-1185">Reference proteome</keyword>
<keyword id="KW-0687">Ribonucleoprotein</keyword>
<keyword id="KW-0689">Ribosomal protein</keyword>
<evidence type="ECO:0000255" key="1">
    <source>
        <dbReference type="HAMAP-Rule" id="MF_01366"/>
    </source>
</evidence>
<evidence type="ECO:0000305" key="2"/>
<dbReference type="EMBL" id="AM180252">
    <property type="protein sequence ID" value="CAJ54613.1"/>
    <property type="molecule type" value="Genomic_DNA"/>
</dbReference>
<dbReference type="RefSeq" id="WP_011526642.1">
    <property type="nucleotide sequence ID" value="NC_008011.1"/>
</dbReference>
<dbReference type="SMR" id="Q1MQW4"/>
<dbReference type="STRING" id="363253.LI0559"/>
<dbReference type="KEGG" id="lip:LI0559"/>
<dbReference type="eggNOG" id="COG0102">
    <property type="taxonomic scope" value="Bacteria"/>
</dbReference>
<dbReference type="HOGENOM" id="CLU_082184_2_2_7"/>
<dbReference type="OrthoDB" id="9801330at2"/>
<dbReference type="Proteomes" id="UP000002430">
    <property type="component" value="Chromosome"/>
</dbReference>
<dbReference type="GO" id="GO:0022625">
    <property type="term" value="C:cytosolic large ribosomal subunit"/>
    <property type="evidence" value="ECO:0007669"/>
    <property type="project" value="TreeGrafter"/>
</dbReference>
<dbReference type="GO" id="GO:0003729">
    <property type="term" value="F:mRNA binding"/>
    <property type="evidence" value="ECO:0007669"/>
    <property type="project" value="TreeGrafter"/>
</dbReference>
<dbReference type="GO" id="GO:0003735">
    <property type="term" value="F:structural constituent of ribosome"/>
    <property type="evidence" value="ECO:0007669"/>
    <property type="project" value="InterPro"/>
</dbReference>
<dbReference type="GO" id="GO:0017148">
    <property type="term" value="P:negative regulation of translation"/>
    <property type="evidence" value="ECO:0007669"/>
    <property type="project" value="TreeGrafter"/>
</dbReference>
<dbReference type="GO" id="GO:0006412">
    <property type="term" value="P:translation"/>
    <property type="evidence" value="ECO:0007669"/>
    <property type="project" value="UniProtKB-UniRule"/>
</dbReference>
<dbReference type="CDD" id="cd00392">
    <property type="entry name" value="Ribosomal_L13"/>
    <property type="match status" value="1"/>
</dbReference>
<dbReference type="FunFam" id="3.90.1180.10:FF:000001">
    <property type="entry name" value="50S ribosomal protein L13"/>
    <property type="match status" value="1"/>
</dbReference>
<dbReference type="Gene3D" id="3.90.1180.10">
    <property type="entry name" value="Ribosomal protein L13"/>
    <property type="match status" value="1"/>
</dbReference>
<dbReference type="HAMAP" id="MF_01366">
    <property type="entry name" value="Ribosomal_uL13"/>
    <property type="match status" value="1"/>
</dbReference>
<dbReference type="InterPro" id="IPR005822">
    <property type="entry name" value="Ribosomal_uL13"/>
</dbReference>
<dbReference type="InterPro" id="IPR005823">
    <property type="entry name" value="Ribosomal_uL13_bac-type"/>
</dbReference>
<dbReference type="InterPro" id="IPR023563">
    <property type="entry name" value="Ribosomal_uL13_CS"/>
</dbReference>
<dbReference type="InterPro" id="IPR036899">
    <property type="entry name" value="Ribosomal_uL13_sf"/>
</dbReference>
<dbReference type="NCBIfam" id="TIGR01066">
    <property type="entry name" value="rplM_bact"/>
    <property type="match status" value="1"/>
</dbReference>
<dbReference type="PANTHER" id="PTHR11545:SF2">
    <property type="entry name" value="LARGE RIBOSOMAL SUBUNIT PROTEIN UL13M"/>
    <property type="match status" value="1"/>
</dbReference>
<dbReference type="PANTHER" id="PTHR11545">
    <property type="entry name" value="RIBOSOMAL PROTEIN L13"/>
    <property type="match status" value="1"/>
</dbReference>
<dbReference type="Pfam" id="PF00572">
    <property type="entry name" value="Ribosomal_L13"/>
    <property type="match status" value="1"/>
</dbReference>
<dbReference type="PIRSF" id="PIRSF002181">
    <property type="entry name" value="Ribosomal_L13"/>
    <property type="match status" value="1"/>
</dbReference>
<dbReference type="SUPFAM" id="SSF52161">
    <property type="entry name" value="Ribosomal protein L13"/>
    <property type="match status" value="1"/>
</dbReference>
<dbReference type="PROSITE" id="PS00783">
    <property type="entry name" value="RIBOSOMAL_L13"/>
    <property type="match status" value="1"/>
</dbReference>
<name>RL13_LAWIP</name>